<comment type="function">
    <text evidence="1 4 5 7 8 11">Cell surface receptor that transfers passive humoral immunity from the mother to the newborn. Binds to the Fc region of monomeric immunoglobulin gamma and mediates its selective uptake from milk (PubMed:10933786, PubMed:7964511). IgG in the milk is bound at the apical surface of the intestinal epithelium. The resultant FcRn-IgG complexes are transcytosed across the intestinal epithelium and IgG is released from FcRn into blood or tissue fluids. Throughout life, contributes to effective humoral immunity by recycling IgG and extending its half-life in the circulation. Mechanistically, monomeric IgG binding to FcRn in acidic endosomes of endothelial and hematopoietic cells recycles IgG to the cell surface where it is released into the circulation (PubMed:10998088). In addition of IgG, regulates homeostasis of the other most abundant circulating protein albumin/ALB (PubMed:24469444, PubMed:28330995).</text>
</comment>
<comment type="function">
    <text evidence="9 10">(Microbial infection) Acts as an uncoating receptor for a panel of echoviruses including Echovirus 5, 6, 7, 9, 11, 13, 25 and 29.</text>
</comment>
<comment type="subunit">
    <text evidence="1 7 8">FcRn complex consists of two subunits: p51, and p14 which is equivalent to beta-2-microglobulin. It forms an MHC class I-like heterodimer (By similarity). Interacts with albumin/ALB; this interaction regulates ALB homeostasis (PubMed:24469444, PubMed:28330995).</text>
</comment>
<comment type="subunit">
    <text evidence="9 10">(Microbial infection) Interacts with Echovirus 6, Echovirus 11 and Echovirus 30 capsid protein VP1.</text>
</comment>
<comment type="interaction">
    <interactant intactId="EBI-2833934">
        <id>P55899</id>
    </interactant>
    <interactant intactId="EBI-12256978">
        <id>Q8N6F1-2</id>
        <label>CLDN19</label>
    </interactant>
    <organismsDiffer>false</organismsDiffer>
    <experiments>3</experiments>
</comment>
<comment type="interaction">
    <interactant intactId="EBI-2833934">
        <id>P55899</id>
    </interactant>
    <interactant intactId="EBI-2876774">
        <id>Q92520</id>
        <label>FAM3C</label>
    </interactant>
    <organismsDiffer>false</organismsDiffer>
    <experiments>3</experiments>
</comment>
<comment type="interaction">
    <interactant intactId="EBI-2833934">
        <id>P55899</id>
    </interactant>
    <interactant intactId="EBI-10317425">
        <id>Q9NZG7</id>
        <label>NINJ2</label>
    </interactant>
    <organismsDiffer>false</organismsDiffer>
    <experiments>3</experiments>
</comment>
<comment type="interaction">
    <interactant intactId="EBI-2833934">
        <id>P55899</id>
    </interactant>
    <interactant intactId="EBI-2845982">
        <id>Q01453</id>
        <label>PMP22</label>
    </interactant>
    <organismsDiffer>false</organismsDiffer>
    <experiments>3</experiments>
</comment>
<comment type="interaction">
    <interactant intactId="EBI-2833934">
        <id>P55899</id>
    </interactant>
    <interactant intactId="EBI-10179682">
        <id>O00526</id>
        <label>UPK2</label>
    </interactant>
    <organismsDiffer>false</organismsDiffer>
    <experiments>3</experiments>
</comment>
<comment type="subcellular location">
    <subcellularLocation>
        <location evidence="1">Cell membrane</location>
        <topology evidence="2">Single-pass type I membrane protein</topology>
    </subcellularLocation>
    <subcellularLocation>
        <location evidence="10">Endosome membrane</location>
    </subcellularLocation>
</comment>
<comment type="tissue specificity">
    <text evidence="8 11">Expressed in full-term placenta, heart, lung, liver, muscle, kidney, pancreas, and both fetal and adult small intestine.</text>
</comment>
<comment type="similarity">
    <text evidence="12">Belongs to the immunoglobulin superfamily.</text>
</comment>
<proteinExistence type="evidence at protein level"/>
<evidence type="ECO:0000250" key="1">
    <source>
        <dbReference type="UniProtKB" id="P13599"/>
    </source>
</evidence>
<evidence type="ECO:0000255" key="2"/>
<evidence type="ECO:0000255" key="3">
    <source>
        <dbReference type="PROSITE-ProRule" id="PRU00114"/>
    </source>
</evidence>
<evidence type="ECO:0000269" key="4">
    <source>
    </source>
</evidence>
<evidence type="ECO:0000269" key="5">
    <source>
    </source>
</evidence>
<evidence type="ECO:0000269" key="6">
    <source>
    </source>
</evidence>
<evidence type="ECO:0000269" key="7">
    <source>
    </source>
</evidence>
<evidence type="ECO:0000269" key="8">
    <source>
    </source>
</evidence>
<evidence type="ECO:0000269" key="9">
    <source>
    </source>
</evidence>
<evidence type="ECO:0000269" key="10">
    <source>
    </source>
</evidence>
<evidence type="ECO:0000269" key="11">
    <source>
    </source>
</evidence>
<evidence type="ECO:0000305" key="12"/>
<evidence type="ECO:0007744" key="13">
    <source>
        <dbReference type="PDB" id="1EXU"/>
    </source>
</evidence>
<evidence type="ECO:0007744" key="14">
    <source>
        <dbReference type="PDB" id="4N0F"/>
    </source>
</evidence>
<evidence type="ECO:0007744" key="15">
    <source>
        <dbReference type="PDB" id="4N0U"/>
    </source>
</evidence>
<evidence type="ECO:0007744" key="16">
    <source>
        <dbReference type="PDB" id="5BJT"/>
    </source>
</evidence>
<evidence type="ECO:0007744" key="17">
    <source>
    </source>
</evidence>
<evidence type="ECO:0007829" key="18">
    <source>
        <dbReference type="PDB" id="3M1B"/>
    </source>
</evidence>
<evidence type="ECO:0007829" key="19">
    <source>
        <dbReference type="PDB" id="5BJT"/>
    </source>
</evidence>
<evidence type="ECO:0007829" key="20">
    <source>
        <dbReference type="PDB" id="6C98"/>
    </source>
</evidence>
<evidence type="ECO:0007829" key="21">
    <source>
        <dbReference type="PDB" id="6FGB"/>
    </source>
</evidence>
<evidence type="ECO:0007829" key="22">
    <source>
        <dbReference type="PDB" id="6ILM"/>
    </source>
</evidence>
<evidence type="ECO:0007829" key="23">
    <source>
        <dbReference type="PDB" id="6LA6"/>
    </source>
</evidence>
<evidence type="ECO:0007829" key="24">
    <source>
        <dbReference type="PDB" id="6QIO"/>
    </source>
</evidence>
<evidence type="ECO:0007829" key="25">
    <source>
        <dbReference type="PDB" id="6WNA"/>
    </source>
</evidence>
<keyword id="KW-0002">3D-structure</keyword>
<keyword id="KW-1003">Cell membrane</keyword>
<keyword id="KW-0903">Direct protein sequencing</keyword>
<keyword id="KW-1015">Disulfide bond</keyword>
<keyword id="KW-0967">Endosome</keyword>
<keyword id="KW-0325">Glycoprotein</keyword>
<keyword id="KW-0390">IgG-binding protein</keyword>
<keyword id="KW-0393">Immunoglobulin domain</keyword>
<keyword id="KW-0472">Membrane</keyword>
<keyword id="KW-0597">Phosphoprotein</keyword>
<keyword id="KW-1267">Proteomics identification</keyword>
<keyword id="KW-0675">Receptor</keyword>
<keyword id="KW-1185">Reference proteome</keyword>
<keyword id="KW-0732">Signal</keyword>
<keyword id="KW-0812">Transmembrane</keyword>
<keyword id="KW-1133">Transmembrane helix</keyword>
<feature type="signal peptide" evidence="6">
    <location>
        <begin position="1"/>
        <end position="23"/>
    </location>
</feature>
<feature type="chain" id="PRO_0000015157" description="IgG receptor FcRn large subunit p51" evidence="6">
    <location>
        <begin position="24"/>
        <end position="365"/>
    </location>
</feature>
<feature type="topological domain" description="Extracellular" evidence="2">
    <location>
        <begin position="24"/>
        <end position="297"/>
    </location>
</feature>
<feature type="transmembrane region" description="Helical" evidence="2">
    <location>
        <begin position="298"/>
        <end position="321"/>
    </location>
</feature>
<feature type="topological domain" description="Cytoplasmic" evidence="2">
    <location>
        <begin position="322"/>
        <end position="365"/>
    </location>
</feature>
<feature type="domain" description="Ig-like C1-type" evidence="3">
    <location>
        <begin position="202"/>
        <end position="289"/>
    </location>
</feature>
<feature type="region of interest" description="Alpha-1" evidence="4 13">
    <location>
        <begin position="24"/>
        <end position="110"/>
    </location>
</feature>
<feature type="region of interest" description="Alpha-2" evidence="4 13">
    <location>
        <begin position="111"/>
        <end position="200"/>
    </location>
</feature>
<feature type="region of interest" description="Alpha-3" evidence="4 13">
    <location>
        <begin position="201"/>
        <end position="290"/>
    </location>
</feature>
<feature type="region of interest" description="Connecting peptide">
    <location>
        <begin position="291"/>
        <end position="297"/>
    </location>
</feature>
<feature type="modified residue" description="Phosphoserine" evidence="17">
    <location>
        <position position="334"/>
    </location>
</feature>
<feature type="glycosylation site" description="N-linked (GlcNAc...) asparagine" evidence="2">
    <location>
        <position position="125"/>
    </location>
</feature>
<feature type="disulfide bond" evidence="4 7 8 13 14 15 16">
    <location>
        <begin position="119"/>
        <end position="182"/>
    </location>
</feature>
<feature type="disulfide bond" evidence="4 7 8 13 14 15 16">
    <location>
        <begin position="221"/>
        <end position="275"/>
    </location>
</feature>
<feature type="sequence conflict" description="In Ref. 3; AAG31421." evidence="12" ref="3">
    <location>
        <begin position="101"/>
        <end position="103"/>
    </location>
</feature>
<feature type="sequence conflict" description="In Ref. 2; AAF72596." evidence="12" ref="2">
    <original>E</original>
    <variation>G</variation>
    <location>
        <position position="201"/>
    </location>
</feature>
<feature type="strand" evidence="20">
    <location>
        <begin position="29"/>
        <end position="39"/>
    </location>
</feature>
<feature type="strand" evidence="20">
    <location>
        <begin position="46"/>
        <end position="53"/>
    </location>
</feature>
<feature type="strand" evidence="20">
    <location>
        <begin position="56"/>
        <end position="62"/>
    </location>
</feature>
<feature type="turn" evidence="20">
    <location>
        <begin position="63"/>
        <end position="65"/>
    </location>
</feature>
<feature type="strand" evidence="22">
    <location>
        <begin position="66"/>
        <end position="68"/>
    </location>
</feature>
<feature type="helix" evidence="20">
    <location>
        <begin position="72"/>
        <end position="76"/>
    </location>
</feature>
<feature type="turn" evidence="23">
    <location>
        <begin position="80"/>
        <end position="82"/>
    </location>
</feature>
<feature type="helix" evidence="20">
    <location>
        <begin position="83"/>
        <end position="104"/>
    </location>
</feature>
<feature type="strand" evidence="25">
    <location>
        <begin position="107"/>
        <end position="109"/>
    </location>
</feature>
<feature type="strand" evidence="20">
    <location>
        <begin position="112"/>
        <end position="121"/>
    </location>
</feature>
<feature type="helix" evidence="20">
    <location>
        <begin position="123"/>
        <end position="125"/>
    </location>
</feature>
<feature type="strand" evidence="20">
    <location>
        <begin position="127"/>
        <end position="135"/>
    </location>
</feature>
<feature type="strand" evidence="20">
    <location>
        <begin position="138"/>
        <end position="144"/>
    </location>
</feature>
<feature type="turn" evidence="20">
    <location>
        <begin position="145"/>
        <end position="148"/>
    </location>
</feature>
<feature type="strand" evidence="20">
    <location>
        <begin position="149"/>
        <end position="151"/>
    </location>
</feature>
<feature type="helix" evidence="20">
    <location>
        <begin position="155"/>
        <end position="166"/>
    </location>
</feature>
<feature type="strand" evidence="21">
    <location>
        <begin position="167"/>
        <end position="169"/>
    </location>
</feature>
<feature type="helix" evidence="20">
    <location>
        <begin position="170"/>
        <end position="179"/>
    </location>
</feature>
<feature type="helix" evidence="20">
    <location>
        <begin position="181"/>
        <end position="192"/>
    </location>
</feature>
<feature type="helix" evidence="20">
    <location>
        <begin position="194"/>
        <end position="197"/>
    </location>
</feature>
<feature type="strand" evidence="20">
    <location>
        <begin position="204"/>
        <end position="211"/>
    </location>
</feature>
<feature type="strand" evidence="18">
    <location>
        <begin position="213"/>
        <end position="215"/>
    </location>
</feature>
<feature type="strand" evidence="20">
    <location>
        <begin position="216"/>
        <end position="229"/>
    </location>
</feature>
<feature type="strand" evidence="20">
    <location>
        <begin position="231"/>
        <end position="237"/>
    </location>
</feature>
<feature type="strand" evidence="20">
    <location>
        <begin position="240"/>
        <end position="243"/>
    </location>
</feature>
<feature type="strand" evidence="20">
    <location>
        <begin position="246"/>
        <end position="251"/>
    </location>
</feature>
<feature type="strand" evidence="21">
    <location>
        <begin position="253"/>
        <end position="255"/>
    </location>
</feature>
<feature type="strand" evidence="20">
    <location>
        <begin position="257"/>
        <end position="266"/>
    </location>
</feature>
<feature type="turn" evidence="19">
    <location>
        <begin position="267"/>
        <end position="269"/>
    </location>
</feature>
<feature type="helix" evidence="20">
    <location>
        <begin position="270"/>
        <end position="272"/>
    </location>
</feature>
<feature type="strand" evidence="20">
    <location>
        <begin position="273"/>
        <end position="279"/>
    </location>
</feature>
<feature type="strand" evidence="24">
    <location>
        <begin position="282"/>
        <end position="284"/>
    </location>
</feature>
<feature type="strand" evidence="20">
    <location>
        <begin position="286"/>
        <end position="288"/>
    </location>
</feature>
<gene>
    <name type="primary">FCGRT</name>
    <name type="synonym">FCRN</name>
</gene>
<sequence length="365" mass="39743">MGVPRPQPWALGLLLFLLPGSLGAESHLSLLYHLTAVSSPAPGTPAFWVSGWLGPQQYLSYNSLRGEAEPCGAWVWENQVSWYWEKETTDLRIKEKLFLEAFKALGGKGPYTLQGLLGCELGPDNTSVPTAKFALNGEEFMNFDLKQGTWGGDWPEALAISQRWQQQDKAANKELTFLLFSCPHRLREHLERGRGNLEWKEPPSMRLKARPSSPGFSVLTCSAFSFYPPELQLRFLRNGLAAGTGQGDFGPNSDGSFHASSSLTVKSGDEHHYCCIVQHAGLAQPLRVELESPAKSSVLVVGIVIGVLLLTAAAVGGALLWRRMRSGLPAPWISLRGDDTGVLLPTPGEAQDADLKDVNVIPATA</sequence>
<accession>P55899</accession>
<accession>Q5HYM5</accession>
<accession>Q9HBV7</accession>
<accession>Q9NZ19</accession>
<protein>
    <recommendedName>
        <fullName>IgG receptor FcRn large subunit p51</fullName>
        <shortName>FcRn</shortName>
    </recommendedName>
    <alternativeName>
        <fullName>IgG Fc fragment receptor transporter alpha chain</fullName>
    </alternativeName>
    <alternativeName>
        <fullName>Neonatal Fc receptor</fullName>
    </alternativeName>
</protein>
<dbReference type="EMBL" id="U12255">
    <property type="protein sequence ID" value="AAA58958.1"/>
    <property type="molecule type" value="mRNA"/>
</dbReference>
<dbReference type="EMBL" id="AF220542">
    <property type="protein sequence ID" value="AAF72596.1"/>
    <property type="molecule type" value="Genomic_DNA"/>
</dbReference>
<dbReference type="EMBL" id="AF200220">
    <property type="protein sequence ID" value="AAG31421.1"/>
    <property type="molecule type" value="Genomic_DNA"/>
</dbReference>
<dbReference type="EMBL" id="AF200219">
    <property type="protein sequence ID" value="AAG31421.1"/>
    <property type="status" value="JOINED"/>
    <property type="molecule type" value="Genomic_DNA"/>
</dbReference>
<dbReference type="EMBL" id="BX647163">
    <property type="protein sequence ID" value="CAI46032.1"/>
    <property type="molecule type" value="mRNA"/>
</dbReference>
<dbReference type="EMBL" id="CH471177">
    <property type="protein sequence ID" value="EAW52498.1"/>
    <property type="molecule type" value="Genomic_DNA"/>
</dbReference>
<dbReference type="EMBL" id="BC008734">
    <property type="protein sequence ID" value="AAH08734.1"/>
    <property type="molecule type" value="mRNA"/>
</dbReference>
<dbReference type="CCDS" id="CCDS12770.1"/>
<dbReference type="PIR" id="I38720">
    <property type="entry name" value="I38720"/>
</dbReference>
<dbReference type="RefSeq" id="NP_001129491.1">
    <property type="nucleotide sequence ID" value="NM_001136019.3"/>
</dbReference>
<dbReference type="RefSeq" id="NP_004098.1">
    <property type="nucleotide sequence ID" value="NM_004107.5"/>
</dbReference>
<dbReference type="RefSeq" id="XP_054176174.1">
    <property type="nucleotide sequence ID" value="XM_054320199.1"/>
</dbReference>
<dbReference type="PDB" id="1EXU">
    <property type="method" value="X-ray"/>
    <property type="resolution" value="2.70 A"/>
    <property type="chains" value="A=24-290"/>
</dbReference>
<dbReference type="PDB" id="3M17">
    <property type="method" value="X-ray"/>
    <property type="resolution" value="2.60 A"/>
    <property type="chains" value="A/C/E/G=24-290"/>
</dbReference>
<dbReference type="PDB" id="3M1B">
    <property type="method" value="X-ray"/>
    <property type="resolution" value="3.10 A"/>
    <property type="chains" value="A/C/E/G=24-290"/>
</dbReference>
<dbReference type="PDB" id="4K71">
    <property type="method" value="X-ray"/>
    <property type="resolution" value="2.40 A"/>
    <property type="chains" value="B/E=24-297"/>
</dbReference>
<dbReference type="PDB" id="4N0F">
    <property type="method" value="X-ray"/>
    <property type="resolution" value="3.02 A"/>
    <property type="chains" value="A/E/H/K=27-297"/>
</dbReference>
<dbReference type="PDB" id="4N0U">
    <property type="method" value="X-ray"/>
    <property type="resolution" value="3.80 A"/>
    <property type="chains" value="A=27-290"/>
</dbReference>
<dbReference type="PDB" id="5BJT">
    <property type="method" value="X-ray"/>
    <property type="resolution" value="3.20 A"/>
    <property type="chains" value="A/C/E/G=24-290"/>
</dbReference>
<dbReference type="PDB" id="5BXF">
    <property type="method" value="X-ray"/>
    <property type="resolution" value="2.85 A"/>
    <property type="chains" value="A/C=1-290"/>
</dbReference>
<dbReference type="PDB" id="5WHK">
    <property type="method" value="X-ray"/>
    <property type="resolution" value="2.50 A"/>
    <property type="chains" value="A=1-297"/>
</dbReference>
<dbReference type="PDB" id="6C97">
    <property type="method" value="X-ray"/>
    <property type="resolution" value="2.00 A"/>
    <property type="chains" value="A/C=24-297"/>
</dbReference>
<dbReference type="PDB" id="6C98">
    <property type="method" value="X-ray"/>
    <property type="resolution" value="1.85 A"/>
    <property type="chains" value="A/C=24-297"/>
</dbReference>
<dbReference type="PDB" id="6C99">
    <property type="method" value="X-ray"/>
    <property type="resolution" value="2.00 A"/>
    <property type="chains" value="A/C=24-297"/>
</dbReference>
<dbReference type="PDB" id="6FGB">
    <property type="method" value="X-ray"/>
    <property type="resolution" value="2.90 A"/>
    <property type="chains" value="A=24-365"/>
</dbReference>
<dbReference type="PDB" id="6ILM">
    <property type="method" value="EM"/>
    <property type="resolution" value="3.40 A"/>
    <property type="chains" value="E=28-290"/>
</dbReference>
<dbReference type="PDB" id="6LA6">
    <property type="method" value="EM"/>
    <property type="resolution" value="2.39 A"/>
    <property type="chains" value="E=28-290"/>
</dbReference>
<dbReference type="PDB" id="6LA7">
    <property type="method" value="EM"/>
    <property type="resolution" value="2.82 A"/>
    <property type="chains" value="E=28-290"/>
</dbReference>
<dbReference type="PDB" id="6NHA">
    <property type="method" value="X-ray"/>
    <property type="resolution" value="2.38 A"/>
    <property type="chains" value="A=24-296"/>
</dbReference>
<dbReference type="PDB" id="6QIO">
    <property type="method" value="X-ray"/>
    <property type="resolution" value="1.95 A"/>
    <property type="chains" value="B=24-297"/>
</dbReference>
<dbReference type="PDB" id="6QIP">
    <property type="method" value="X-ray"/>
    <property type="resolution" value="2.45 A"/>
    <property type="chains" value="B=24-297"/>
</dbReference>
<dbReference type="PDB" id="6WNA">
    <property type="method" value="X-ray"/>
    <property type="resolution" value="2.40 A"/>
    <property type="chains" value="A=27-290"/>
</dbReference>
<dbReference type="PDB" id="6WOL">
    <property type="method" value="X-ray"/>
    <property type="resolution" value="2.49 A"/>
    <property type="chains" value="A=24-290"/>
</dbReference>
<dbReference type="PDB" id="7B5F">
    <property type="method" value="EM"/>
    <property type="resolution" value="2.90 A"/>
    <property type="chains" value="G=24-290"/>
</dbReference>
<dbReference type="PDB" id="7C9V">
    <property type="method" value="EM"/>
    <property type="resolution" value="3.30 A"/>
    <property type="chains" value="E=28-290"/>
</dbReference>
<dbReference type="PDB" id="7Q15">
    <property type="method" value="X-ray"/>
    <property type="resolution" value="3.30 A"/>
    <property type="chains" value="A/C=1-297"/>
</dbReference>
<dbReference type="PDB" id="7XXA">
    <property type="method" value="EM"/>
    <property type="resolution" value="3.09 A"/>
    <property type="chains" value="E=28-290"/>
</dbReference>
<dbReference type="PDB" id="9MI6">
    <property type="method" value="X-ray"/>
    <property type="resolution" value="2.41 A"/>
    <property type="chains" value="A=24-297"/>
</dbReference>
<dbReference type="PDBsum" id="1EXU"/>
<dbReference type="PDBsum" id="3M17"/>
<dbReference type="PDBsum" id="3M1B"/>
<dbReference type="PDBsum" id="4K71"/>
<dbReference type="PDBsum" id="4N0F"/>
<dbReference type="PDBsum" id="4N0U"/>
<dbReference type="PDBsum" id="5BJT"/>
<dbReference type="PDBsum" id="5BXF"/>
<dbReference type="PDBsum" id="5WHK"/>
<dbReference type="PDBsum" id="6C97"/>
<dbReference type="PDBsum" id="6C98"/>
<dbReference type="PDBsum" id="6C99"/>
<dbReference type="PDBsum" id="6FGB"/>
<dbReference type="PDBsum" id="6ILM"/>
<dbReference type="PDBsum" id="6LA6"/>
<dbReference type="PDBsum" id="6LA7"/>
<dbReference type="PDBsum" id="6NHA"/>
<dbReference type="PDBsum" id="6QIO"/>
<dbReference type="PDBsum" id="6QIP"/>
<dbReference type="PDBsum" id="6WNA"/>
<dbReference type="PDBsum" id="6WOL"/>
<dbReference type="PDBsum" id="7B5F"/>
<dbReference type="PDBsum" id="7C9V"/>
<dbReference type="PDBsum" id="7Q15"/>
<dbReference type="PDBsum" id="7XXA"/>
<dbReference type="PDBsum" id="9MI6"/>
<dbReference type="EMDB" id="EMD-0857"/>
<dbReference type="EMDB" id="EMD-0858"/>
<dbReference type="EMDB" id="EMD-12028"/>
<dbReference type="EMDB" id="EMD-30318"/>
<dbReference type="EMDB" id="EMD-33499"/>
<dbReference type="EMDB" id="EMD-9687"/>
<dbReference type="SASBDB" id="P55899"/>
<dbReference type="SMR" id="P55899"/>
<dbReference type="BioGRID" id="108511">
    <property type="interactions" value="124"/>
</dbReference>
<dbReference type="DIP" id="DIP-6165N"/>
<dbReference type="FunCoup" id="P55899">
    <property type="interactions" value="48"/>
</dbReference>
<dbReference type="IntAct" id="P55899">
    <property type="interactions" value="108"/>
</dbReference>
<dbReference type="MINT" id="P55899"/>
<dbReference type="STRING" id="9606.ENSP00000410798"/>
<dbReference type="BindingDB" id="P55899"/>
<dbReference type="ChEMBL" id="CHEMBL5966"/>
<dbReference type="DrugBank" id="DB15270">
    <property type="generic name" value="Efgartigimod alfa"/>
</dbReference>
<dbReference type="DrugBank" id="DB11608">
    <property type="generic name" value="Eftrenonacog alfa"/>
</dbReference>
<dbReference type="DrugBank" id="DB14919">
    <property type="generic name" value="Rozanolixizumab"/>
</dbReference>
<dbReference type="DrugCentral" id="P55899"/>
<dbReference type="GuidetoPHARMACOLOGY" id="2985"/>
<dbReference type="TCDB" id="9.A.75.1.4">
    <property type="family name" value="the mhc ii receptor (mhc2r) family"/>
</dbReference>
<dbReference type="GlyConnect" id="1387">
    <property type="glycosylation" value="2 N-Linked glycans (1 site)"/>
</dbReference>
<dbReference type="GlyCosmos" id="P55899">
    <property type="glycosylation" value="2 sites, 2 glycans"/>
</dbReference>
<dbReference type="GlyGen" id="P55899">
    <property type="glycosylation" value="3 sites, 48 N-linked glycans (1 site), 1 O-linked glycan (1 site)"/>
</dbReference>
<dbReference type="iPTMnet" id="P55899"/>
<dbReference type="PhosphoSitePlus" id="P55899"/>
<dbReference type="SwissPalm" id="P55899"/>
<dbReference type="BioMuta" id="FCGRT"/>
<dbReference type="DMDM" id="2497331"/>
<dbReference type="jPOST" id="P55899"/>
<dbReference type="MassIVE" id="P55899"/>
<dbReference type="PaxDb" id="9606-ENSP00000221466"/>
<dbReference type="PeptideAtlas" id="P55899"/>
<dbReference type="ProteomicsDB" id="56878"/>
<dbReference type="ABCD" id="P55899">
    <property type="antibodies" value="11 sequenced antibodies"/>
</dbReference>
<dbReference type="Antibodypedia" id="1522">
    <property type="antibodies" value="382 antibodies from 34 providers"/>
</dbReference>
<dbReference type="DNASU" id="2217"/>
<dbReference type="Ensembl" id="ENST00000221466.10">
    <property type="protein sequence ID" value="ENSP00000221466.4"/>
    <property type="gene ID" value="ENSG00000104870.13"/>
</dbReference>
<dbReference type="Ensembl" id="ENST00000426395.7">
    <property type="protein sequence ID" value="ENSP00000410798.2"/>
    <property type="gene ID" value="ENSG00000104870.13"/>
</dbReference>
<dbReference type="GeneID" id="2217"/>
<dbReference type="KEGG" id="hsa:2217"/>
<dbReference type="MANE-Select" id="ENST00000221466.10">
    <property type="protein sequence ID" value="ENSP00000221466.4"/>
    <property type="RefSeq nucleotide sequence ID" value="NM_001136019.3"/>
    <property type="RefSeq protein sequence ID" value="NP_001129491.1"/>
</dbReference>
<dbReference type="UCSC" id="uc002poe.3">
    <property type="organism name" value="human"/>
</dbReference>
<dbReference type="AGR" id="HGNC:3621"/>
<dbReference type="CTD" id="2217"/>
<dbReference type="DisGeNET" id="2217"/>
<dbReference type="GeneCards" id="FCGRT"/>
<dbReference type="HGNC" id="HGNC:3621">
    <property type="gene designation" value="FCGRT"/>
</dbReference>
<dbReference type="HPA" id="ENSG00000104870">
    <property type="expression patterns" value="Low tissue specificity"/>
</dbReference>
<dbReference type="MIM" id="601437">
    <property type="type" value="gene"/>
</dbReference>
<dbReference type="neXtProt" id="NX_P55899"/>
<dbReference type="OpenTargets" id="ENSG00000104870"/>
<dbReference type="PharmGKB" id="PA28067"/>
<dbReference type="VEuPathDB" id="HostDB:ENSG00000104870"/>
<dbReference type="eggNOG" id="ENOG502RTZ5">
    <property type="taxonomic scope" value="Eukaryota"/>
</dbReference>
<dbReference type="GeneTree" id="ENSGT01130000278293"/>
<dbReference type="InParanoid" id="P55899"/>
<dbReference type="OMA" id="TWDGDWP"/>
<dbReference type="OrthoDB" id="8890485at2759"/>
<dbReference type="PAN-GO" id="P55899">
    <property type="GO annotations" value="4 GO annotations based on evolutionary models"/>
</dbReference>
<dbReference type="PhylomeDB" id="P55899"/>
<dbReference type="TreeFam" id="TF336617"/>
<dbReference type="PathwayCommons" id="P55899"/>
<dbReference type="SignaLink" id="P55899"/>
<dbReference type="BioGRID-ORCS" id="2217">
    <property type="hits" value="13 hits in 1147 CRISPR screens"/>
</dbReference>
<dbReference type="ChiTaRS" id="FCGRT">
    <property type="organism name" value="human"/>
</dbReference>
<dbReference type="EvolutionaryTrace" id="P55899"/>
<dbReference type="GeneWiki" id="FCGRT"/>
<dbReference type="GenomeRNAi" id="2217"/>
<dbReference type="Pharos" id="P55899">
    <property type="development level" value="Tclin"/>
</dbReference>
<dbReference type="PRO" id="PR:P55899"/>
<dbReference type="Proteomes" id="UP000005640">
    <property type="component" value="Chromosome 19"/>
</dbReference>
<dbReference type="RNAct" id="P55899">
    <property type="molecule type" value="protein"/>
</dbReference>
<dbReference type="Bgee" id="ENSG00000104870">
    <property type="expression patterns" value="Expressed in mucosa of transverse colon and 175 other cell types or tissues"/>
</dbReference>
<dbReference type="ExpressionAtlas" id="P55899">
    <property type="expression patterns" value="baseline and differential"/>
</dbReference>
<dbReference type="GO" id="GO:0010008">
    <property type="term" value="C:endosome membrane"/>
    <property type="evidence" value="ECO:0007669"/>
    <property type="project" value="UniProtKB-SubCell"/>
</dbReference>
<dbReference type="GO" id="GO:0009897">
    <property type="term" value="C:external side of plasma membrane"/>
    <property type="evidence" value="ECO:0000318"/>
    <property type="project" value="GO_Central"/>
</dbReference>
<dbReference type="GO" id="GO:0005615">
    <property type="term" value="C:extracellular space"/>
    <property type="evidence" value="ECO:0000318"/>
    <property type="project" value="GO_Central"/>
</dbReference>
<dbReference type="GO" id="GO:0030881">
    <property type="term" value="F:beta-2-microglobulin binding"/>
    <property type="evidence" value="ECO:0000318"/>
    <property type="project" value="GO_Central"/>
</dbReference>
<dbReference type="GO" id="GO:0019864">
    <property type="term" value="F:IgG binding"/>
    <property type="evidence" value="ECO:0000314"/>
    <property type="project" value="UniProtKB"/>
</dbReference>
<dbReference type="GO" id="GO:0002416">
    <property type="term" value="P:IgG immunoglobulin transcytosis in epithelial cells mediated by FcRn immunoglobulin receptor"/>
    <property type="evidence" value="ECO:0000303"/>
    <property type="project" value="UniProtKB"/>
</dbReference>
<dbReference type="GO" id="GO:0006955">
    <property type="term" value="P:immune response"/>
    <property type="evidence" value="ECO:0000318"/>
    <property type="project" value="GO_Central"/>
</dbReference>
<dbReference type="CDD" id="cd21011">
    <property type="entry name" value="IgC1_MHC-like_FcRn"/>
    <property type="match status" value="1"/>
</dbReference>
<dbReference type="FunFam" id="2.60.40.10:FF:000693">
    <property type="entry name" value="IgG receptor FcRn large subunit p51"/>
    <property type="match status" value="1"/>
</dbReference>
<dbReference type="FunFam" id="3.30.500.10:FF:000003">
    <property type="entry name" value="IgG receptor FcRn large subunit p51"/>
    <property type="match status" value="1"/>
</dbReference>
<dbReference type="Gene3D" id="2.60.40.10">
    <property type="entry name" value="Immunoglobulins"/>
    <property type="match status" value="1"/>
</dbReference>
<dbReference type="Gene3D" id="3.30.500.10">
    <property type="entry name" value="MHC class I-like antigen recognition-like"/>
    <property type="match status" value="1"/>
</dbReference>
<dbReference type="InterPro" id="IPR007110">
    <property type="entry name" value="Ig-like_dom"/>
</dbReference>
<dbReference type="InterPro" id="IPR036179">
    <property type="entry name" value="Ig-like_dom_sf"/>
</dbReference>
<dbReference type="InterPro" id="IPR013783">
    <property type="entry name" value="Ig-like_fold"/>
</dbReference>
<dbReference type="InterPro" id="IPR003006">
    <property type="entry name" value="Ig/MHC_CS"/>
</dbReference>
<dbReference type="InterPro" id="IPR003597">
    <property type="entry name" value="Ig_C1-set"/>
</dbReference>
<dbReference type="InterPro" id="IPR050208">
    <property type="entry name" value="MHC_class-I_related"/>
</dbReference>
<dbReference type="InterPro" id="IPR011161">
    <property type="entry name" value="MHC_I-like_Ag-recog"/>
</dbReference>
<dbReference type="InterPro" id="IPR037055">
    <property type="entry name" value="MHC_I-like_Ag-recog_sf"/>
</dbReference>
<dbReference type="InterPro" id="IPR011162">
    <property type="entry name" value="MHC_I/II-like_Ag-recog"/>
</dbReference>
<dbReference type="PANTHER" id="PTHR16675:SF3">
    <property type="entry name" value="IGG RECEPTOR FCRN LARGE SUBUNIT P51"/>
    <property type="match status" value="1"/>
</dbReference>
<dbReference type="PANTHER" id="PTHR16675">
    <property type="entry name" value="MHC CLASS I-RELATED"/>
    <property type="match status" value="1"/>
</dbReference>
<dbReference type="Pfam" id="PF07654">
    <property type="entry name" value="C1-set"/>
    <property type="match status" value="1"/>
</dbReference>
<dbReference type="Pfam" id="PF00129">
    <property type="entry name" value="MHC_I"/>
    <property type="match status" value="1"/>
</dbReference>
<dbReference type="SMART" id="SM00407">
    <property type="entry name" value="IGc1"/>
    <property type="match status" value="1"/>
</dbReference>
<dbReference type="SUPFAM" id="SSF48726">
    <property type="entry name" value="Immunoglobulin"/>
    <property type="match status" value="1"/>
</dbReference>
<dbReference type="SUPFAM" id="SSF54452">
    <property type="entry name" value="MHC antigen-recognition domain"/>
    <property type="match status" value="1"/>
</dbReference>
<dbReference type="PROSITE" id="PS50835">
    <property type="entry name" value="IG_LIKE"/>
    <property type="match status" value="1"/>
</dbReference>
<dbReference type="PROSITE" id="PS00290">
    <property type="entry name" value="IG_MHC"/>
    <property type="match status" value="1"/>
</dbReference>
<name>FCGRN_HUMAN</name>
<organism>
    <name type="scientific">Homo sapiens</name>
    <name type="common">Human</name>
    <dbReference type="NCBI Taxonomy" id="9606"/>
    <lineage>
        <taxon>Eukaryota</taxon>
        <taxon>Metazoa</taxon>
        <taxon>Chordata</taxon>
        <taxon>Craniata</taxon>
        <taxon>Vertebrata</taxon>
        <taxon>Euteleostomi</taxon>
        <taxon>Mammalia</taxon>
        <taxon>Eutheria</taxon>
        <taxon>Euarchontoglires</taxon>
        <taxon>Primates</taxon>
        <taxon>Haplorrhini</taxon>
        <taxon>Catarrhini</taxon>
        <taxon>Hominidae</taxon>
        <taxon>Homo</taxon>
    </lineage>
</organism>
<reference key="1">
    <citation type="journal article" date="1994" name="J. Exp. Med.">
        <title>A major histocompatibility complex class I-like Fc receptor cloned from human placenta: possible role in transfer of immunoglobulin G from mother to fetus.</title>
        <authorList>
            <person name="Story C.M."/>
            <person name="Mikulska J."/>
            <person name="Simister N.E."/>
        </authorList>
    </citation>
    <scope>NUCLEOTIDE SEQUENCE [MRNA]</scope>
    <scope>FUNCTION</scope>
    <scope>TISSUE SPECIFICITY</scope>
    <source>
        <tissue>Placenta</tissue>
    </source>
</reference>
<reference key="2">
    <citation type="submission" date="2000-01" db="EMBL/GenBank/DDBJ databases">
        <title>Partial sequence of the human fcgrt gene and its 5' upstream region.</title>
        <authorList>
            <person name="Tiwari B."/>
            <person name="Junghans R.P."/>
        </authorList>
    </citation>
    <scope>NUCLEOTIDE SEQUENCE [GENOMIC DNA]</scope>
</reference>
<reference key="3">
    <citation type="journal article" date="2000" name="Eur. J. Immunogenet.">
        <title>Cloning and analysis of the gene encoding the human neonatal Fc receptor.</title>
        <authorList>
            <person name="Mikulska J.E."/>
            <person name="Pablo L."/>
            <person name="Canel J."/>
            <person name="Simister N.E."/>
        </authorList>
    </citation>
    <scope>NUCLEOTIDE SEQUENCE [GENOMIC DNA]</scope>
</reference>
<reference key="4">
    <citation type="journal article" date="2007" name="BMC Genomics">
        <title>The full-ORF clone resource of the German cDNA consortium.</title>
        <authorList>
            <person name="Bechtel S."/>
            <person name="Rosenfelder H."/>
            <person name="Duda A."/>
            <person name="Schmidt C.P."/>
            <person name="Ernst U."/>
            <person name="Wellenreuther R."/>
            <person name="Mehrle A."/>
            <person name="Schuster C."/>
            <person name="Bahr A."/>
            <person name="Bloecker H."/>
            <person name="Heubner D."/>
            <person name="Hoerlein A."/>
            <person name="Michel G."/>
            <person name="Wedler H."/>
            <person name="Koehrer K."/>
            <person name="Ottenwaelder B."/>
            <person name="Poustka A."/>
            <person name="Wiemann S."/>
            <person name="Schupp I."/>
        </authorList>
    </citation>
    <scope>NUCLEOTIDE SEQUENCE [LARGE SCALE MRNA]</scope>
    <source>
        <tissue>Rectum tumor</tissue>
    </source>
</reference>
<reference key="5">
    <citation type="submission" date="2005-07" db="EMBL/GenBank/DDBJ databases">
        <authorList>
            <person name="Mural R.J."/>
            <person name="Istrail S."/>
            <person name="Sutton G.G."/>
            <person name="Florea L."/>
            <person name="Halpern A.L."/>
            <person name="Mobarry C.M."/>
            <person name="Lippert R."/>
            <person name="Walenz B."/>
            <person name="Shatkay H."/>
            <person name="Dew I."/>
            <person name="Miller J.R."/>
            <person name="Flanigan M.J."/>
            <person name="Edwards N.J."/>
            <person name="Bolanos R."/>
            <person name="Fasulo D."/>
            <person name="Halldorsson B.V."/>
            <person name="Hannenhalli S."/>
            <person name="Turner R."/>
            <person name="Yooseph S."/>
            <person name="Lu F."/>
            <person name="Nusskern D.R."/>
            <person name="Shue B.C."/>
            <person name="Zheng X.H."/>
            <person name="Zhong F."/>
            <person name="Delcher A.L."/>
            <person name="Huson D.H."/>
            <person name="Kravitz S.A."/>
            <person name="Mouchard L."/>
            <person name="Reinert K."/>
            <person name="Remington K.A."/>
            <person name="Clark A.G."/>
            <person name="Waterman M.S."/>
            <person name="Eichler E.E."/>
            <person name="Adams M.D."/>
            <person name="Hunkapiller M.W."/>
            <person name="Myers E.W."/>
            <person name="Venter J.C."/>
        </authorList>
    </citation>
    <scope>NUCLEOTIDE SEQUENCE [LARGE SCALE GENOMIC DNA]</scope>
</reference>
<reference key="6">
    <citation type="journal article" date="2004" name="Genome Res.">
        <title>The status, quality, and expansion of the NIH full-length cDNA project: the Mammalian Gene Collection (MGC).</title>
        <authorList>
            <consortium name="The MGC Project Team"/>
        </authorList>
    </citation>
    <scope>NUCLEOTIDE SEQUENCE [LARGE SCALE MRNA]</scope>
    <source>
        <tissue>Brain</tissue>
    </source>
</reference>
<reference key="7">
    <citation type="journal article" date="2004" name="Protein Sci.">
        <title>Signal peptide prediction based on analysis of experimentally verified cleavage sites.</title>
        <authorList>
            <person name="Zhang Z."/>
            <person name="Henzel W.J."/>
        </authorList>
    </citation>
    <scope>PROTEIN SEQUENCE OF 24-38</scope>
</reference>
<reference key="8">
    <citation type="journal article" date="2003" name="Int. Immunol.">
        <title>Evidence to support the cellular mechanism involved in serum IgG homeostasis in humans.</title>
        <authorList>
            <person name="Ward E.S."/>
            <person name="Zhou J."/>
            <person name="Ghetie V."/>
            <person name="Ober R.J."/>
        </authorList>
    </citation>
    <scope>FUNCTION</scope>
</reference>
<reference key="9">
    <citation type="journal article" date="2011" name="BMC Syst. Biol.">
        <title>Initial characterization of the human central proteome.</title>
        <authorList>
            <person name="Burkard T.R."/>
            <person name="Planyavsky M."/>
            <person name="Kaupe I."/>
            <person name="Breitwieser F.P."/>
            <person name="Buerckstuemmer T."/>
            <person name="Bennett K.L."/>
            <person name="Superti-Furga G."/>
            <person name="Colinge J."/>
        </authorList>
    </citation>
    <scope>IDENTIFICATION BY MASS SPECTROMETRY [LARGE SCALE ANALYSIS]</scope>
</reference>
<reference key="10">
    <citation type="journal article" date="2014" name="J. Proteomics">
        <title>An enzyme assisted RP-RPLC approach for in-depth analysis of human liver phosphoproteome.</title>
        <authorList>
            <person name="Bian Y."/>
            <person name="Song C."/>
            <person name="Cheng K."/>
            <person name="Dong M."/>
            <person name="Wang F."/>
            <person name="Huang J."/>
            <person name="Sun D."/>
            <person name="Wang L."/>
            <person name="Ye M."/>
            <person name="Zou H."/>
        </authorList>
    </citation>
    <scope>PHOSPHORYLATION [LARGE SCALE ANALYSIS] AT SER-334</scope>
    <scope>IDENTIFICATION BY MASS SPECTROMETRY [LARGE SCALE ANALYSIS]</scope>
    <source>
        <tissue>Liver</tissue>
    </source>
</reference>
<reference key="11">
    <citation type="journal article" date="2015" name="Proteomics">
        <title>N-terminome analysis of the human mitochondrial proteome.</title>
        <authorList>
            <person name="Vaca Jacome A.S."/>
            <person name="Rabilloud T."/>
            <person name="Schaeffer-Reiss C."/>
            <person name="Rompais M."/>
            <person name="Ayoub D."/>
            <person name="Lane L."/>
            <person name="Bairoch A."/>
            <person name="Van Dorsselaer A."/>
            <person name="Carapito C."/>
        </authorList>
    </citation>
    <scope>IDENTIFICATION BY MASS SPECTROMETRY [LARGE SCALE ANALYSIS]</scope>
</reference>
<reference key="12">
    <citation type="journal article" date="2019" name="Proc. Natl. Acad. Sci. U.S.A.">
        <title>The neonatal Fc receptor is a pan-echovirus receptor.</title>
        <authorList>
            <person name="Morosky S."/>
            <person name="Wells A.I."/>
            <person name="Lemon K."/>
            <person name="Evans A.S."/>
            <person name="Schamus S."/>
            <person name="Bakkenist C.J."/>
            <person name="Coyne C.B."/>
        </authorList>
    </citation>
    <scope>FUNCTION (MICROBIAL INFECTION)</scope>
    <scope>INTERACTION WITH ECHOVIRUS 11 AND ECHOVIRUS 30 PROTEIN VP1 (MICROBIAL INFECTION)</scope>
</reference>
<reference key="13">
    <citation type="journal article" date="2019" name="Cell">
        <title>Human Neonatal Fc Receptor Is the Cellular Uncoating Receptor for Enterovirus B.</title>
        <authorList>
            <person name="Zhao X."/>
            <person name="Zhang G."/>
            <person name="Liu S."/>
            <person name="Chen X."/>
            <person name="Peng R."/>
            <person name="Dai L."/>
            <person name="Qu X."/>
            <person name="Li S."/>
            <person name="Song H."/>
            <person name="Gao Z."/>
            <person name="Yuan P."/>
            <person name="Liu Z."/>
            <person name="Li C."/>
            <person name="Shang Z."/>
            <person name="Li Y."/>
            <person name="Zhang M."/>
            <person name="Qi J."/>
            <person name="Wang H."/>
            <person name="Du N."/>
            <person name="Wu Y."/>
            <person name="Bi Y."/>
            <person name="Gao S."/>
            <person name="Shi Y."/>
            <person name="Yan J."/>
            <person name="Zhang Y."/>
            <person name="Xie Z."/>
            <person name="Wei W."/>
            <person name="Gao G.F."/>
        </authorList>
    </citation>
    <scope>STRUCTURE BY ELECTRON MICROSCOPY (3.40 ANGSTROMS)</scope>
    <scope>FUNCTION (MICROBIAL INFECTION)</scope>
    <scope>SUBCELLULAR LOCATION</scope>
    <scope>INTERACTION WITH ECHOVIRUS 6 PROTEIN VP1 (MICROBIAL INFECTION)</scope>
</reference>
<reference evidence="13" key="14">
    <citation type="journal article" date="2000" name="Biochemistry">
        <title>Crystal structure and immunoglobulin G binding properties of the human major histocompatibility complex-related Fc receptor.</title>
        <authorList>
            <person name="West A.P. Jr."/>
            <person name="Bjorkman P.J."/>
        </authorList>
    </citation>
    <scope>X-RAY CRYSTALLOGRAPHY (2.70 ANGSTROMS) OF 24-290</scope>
    <scope>FUNCTION</scope>
    <scope>DISULFIDE BONDS</scope>
</reference>
<reference evidence="14 15" key="15">
    <citation type="journal article" date="2014" name="J. Biol. Chem.">
        <title>Structural insights into neonatal Fc receptor-based recycling mechanisms.</title>
        <authorList>
            <person name="Oganesyan V."/>
            <person name="Damschroder M.M."/>
            <person name="Cook K.E."/>
            <person name="Li Q."/>
            <person name="Gao C."/>
            <person name="Wu H."/>
            <person name="Dall'Acqua W.F."/>
        </authorList>
    </citation>
    <scope>X-RAY CRYSTALLOGRAPHY (3.02 ANGSTROMS) OF 27-290</scope>
    <scope>FUNCTION</scope>
    <scope>INTERACTION WITH ALB</scope>
    <scope>DISULFIDE BOND</scope>
</reference>
<reference evidence="16" key="16">
    <citation type="journal article" date="2017" name="Proc. Natl. Acad. Sci. U.S.A.">
        <title>Hepatic FcRn regulates albumin homeostasis and susceptibility to liver injury.</title>
        <authorList>
            <person name="Pyzik M."/>
            <person name="Rath T."/>
            <person name="Kuo T.T."/>
            <person name="Win S."/>
            <person name="Baker K."/>
            <person name="Hubbard J.J."/>
            <person name="Grenha R."/>
            <person name="Gandhi A."/>
            <person name="Kraemer T.D."/>
            <person name="Mezo A.R."/>
            <person name="Taylor Z.S."/>
            <person name="McDonnell K."/>
            <person name="Nienaber V."/>
            <person name="Andersen J.T."/>
            <person name="Mizoguchi A."/>
            <person name="Blumberg L."/>
            <person name="Purohit S."/>
            <person name="Jones S.D."/>
            <person name="Christianson G."/>
            <person name="Lencer W.I."/>
            <person name="Sandlie I."/>
            <person name="Kaplowitz N."/>
            <person name="Roopenian D.C."/>
            <person name="Blumberg R.S."/>
        </authorList>
    </citation>
    <scope>X-RAY CRYSTALLOGRAPHY (3.20 ANGSTROMS) OF 24-290</scope>
    <scope>INTERACTION WITH ALB</scope>
    <scope>FUNCTION</scope>
    <scope>DISULFIDE BOND</scope>
    <scope>TISSUE SPECIFICITY</scope>
</reference>